<dbReference type="EC" id="2.7.7.23" evidence="1"/>
<dbReference type="EC" id="2.3.1.157" evidence="1"/>
<dbReference type="EMBL" id="CP000439">
    <property type="protein sequence ID" value="ABK89380.1"/>
    <property type="molecule type" value="Genomic_DNA"/>
</dbReference>
<dbReference type="RefSeq" id="WP_003038496.1">
    <property type="nucleotide sequence ID" value="NZ_CP009633.1"/>
</dbReference>
<dbReference type="SMR" id="A0Q565"/>
<dbReference type="KEGG" id="ftn:FTN_0484"/>
<dbReference type="KEGG" id="ftx:AW25_1545"/>
<dbReference type="BioCyc" id="FTUL401614:G1G75-506-MONOMER"/>
<dbReference type="UniPathway" id="UPA00113">
    <property type="reaction ID" value="UER00532"/>
</dbReference>
<dbReference type="UniPathway" id="UPA00113">
    <property type="reaction ID" value="UER00533"/>
</dbReference>
<dbReference type="UniPathway" id="UPA00973"/>
<dbReference type="Proteomes" id="UP000000762">
    <property type="component" value="Chromosome"/>
</dbReference>
<dbReference type="GO" id="GO:0005737">
    <property type="term" value="C:cytoplasm"/>
    <property type="evidence" value="ECO:0007669"/>
    <property type="project" value="UniProtKB-SubCell"/>
</dbReference>
<dbReference type="GO" id="GO:0016020">
    <property type="term" value="C:membrane"/>
    <property type="evidence" value="ECO:0007669"/>
    <property type="project" value="GOC"/>
</dbReference>
<dbReference type="GO" id="GO:0019134">
    <property type="term" value="F:glucosamine-1-phosphate N-acetyltransferase activity"/>
    <property type="evidence" value="ECO:0007669"/>
    <property type="project" value="UniProtKB-UniRule"/>
</dbReference>
<dbReference type="GO" id="GO:0000287">
    <property type="term" value="F:magnesium ion binding"/>
    <property type="evidence" value="ECO:0007669"/>
    <property type="project" value="UniProtKB-UniRule"/>
</dbReference>
<dbReference type="GO" id="GO:0003977">
    <property type="term" value="F:UDP-N-acetylglucosamine diphosphorylase activity"/>
    <property type="evidence" value="ECO:0007669"/>
    <property type="project" value="UniProtKB-UniRule"/>
</dbReference>
<dbReference type="GO" id="GO:0000902">
    <property type="term" value="P:cell morphogenesis"/>
    <property type="evidence" value="ECO:0007669"/>
    <property type="project" value="UniProtKB-UniRule"/>
</dbReference>
<dbReference type="GO" id="GO:0071555">
    <property type="term" value="P:cell wall organization"/>
    <property type="evidence" value="ECO:0007669"/>
    <property type="project" value="UniProtKB-KW"/>
</dbReference>
<dbReference type="GO" id="GO:0009245">
    <property type="term" value="P:lipid A biosynthetic process"/>
    <property type="evidence" value="ECO:0007669"/>
    <property type="project" value="UniProtKB-UniRule"/>
</dbReference>
<dbReference type="GO" id="GO:0009252">
    <property type="term" value="P:peptidoglycan biosynthetic process"/>
    <property type="evidence" value="ECO:0007669"/>
    <property type="project" value="UniProtKB-UniRule"/>
</dbReference>
<dbReference type="GO" id="GO:0008360">
    <property type="term" value="P:regulation of cell shape"/>
    <property type="evidence" value="ECO:0007669"/>
    <property type="project" value="UniProtKB-KW"/>
</dbReference>
<dbReference type="GO" id="GO:0006048">
    <property type="term" value="P:UDP-N-acetylglucosamine biosynthetic process"/>
    <property type="evidence" value="ECO:0007669"/>
    <property type="project" value="UniProtKB-UniPathway"/>
</dbReference>
<dbReference type="CDD" id="cd02540">
    <property type="entry name" value="GT2_GlmU_N_bac"/>
    <property type="match status" value="1"/>
</dbReference>
<dbReference type="CDD" id="cd03353">
    <property type="entry name" value="LbH_GlmU_C"/>
    <property type="match status" value="1"/>
</dbReference>
<dbReference type="Gene3D" id="2.160.10.10">
    <property type="entry name" value="Hexapeptide repeat proteins"/>
    <property type="match status" value="1"/>
</dbReference>
<dbReference type="Gene3D" id="3.90.550.10">
    <property type="entry name" value="Spore Coat Polysaccharide Biosynthesis Protein SpsA, Chain A"/>
    <property type="match status" value="1"/>
</dbReference>
<dbReference type="HAMAP" id="MF_01631">
    <property type="entry name" value="GlmU"/>
    <property type="match status" value="1"/>
</dbReference>
<dbReference type="InterPro" id="IPR005882">
    <property type="entry name" value="Bifunctional_GlmU"/>
</dbReference>
<dbReference type="InterPro" id="IPR050065">
    <property type="entry name" value="GlmU-like"/>
</dbReference>
<dbReference type="InterPro" id="IPR038009">
    <property type="entry name" value="GlmU_C_LbH"/>
</dbReference>
<dbReference type="InterPro" id="IPR001451">
    <property type="entry name" value="Hexapep"/>
</dbReference>
<dbReference type="InterPro" id="IPR018357">
    <property type="entry name" value="Hexapep_transf_CS"/>
</dbReference>
<dbReference type="InterPro" id="IPR025877">
    <property type="entry name" value="MobA-like_NTP_Trfase"/>
</dbReference>
<dbReference type="InterPro" id="IPR029044">
    <property type="entry name" value="Nucleotide-diphossugar_trans"/>
</dbReference>
<dbReference type="InterPro" id="IPR011004">
    <property type="entry name" value="Trimer_LpxA-like_sf"/>
</dbReference>
<dbReference type="NCBIfam" id="TIGR01173">
    <property type="entry name" value="glmU"/>
    <property type="match status" value="1"/>
</dbReference>
<dbReference type="PANTHER" id="PTHR43584:SF3">
    <property type="entry name" value="BIFUNCTIONAL PROTEIN GLMU"/>
    <property type="match status" value="1"/>
</dbReference>
<dbReference type="PANTHER" id="PTHR43584">
    <property type="entry name" value="NUCLEOTIDYL TRANSFERASE"/>
    <property type="match status" value="1"/>
</dbReference>
<dbReference type="Pfam" id="PF00132">
    <property type="entry name" value="Hexapep"/>
    <property type="match status" value="2"/>
</dbReference>
<dbReference type="Pfam" id="PF12804">
    <property type="entry name" value="NTP_transf_3"/>
    <property type="match status" value="1"/>
</dbReference>
<dbReference type="SUPFAM" id="SSF53448">
    <property type="entry name" value="Nucleotide-diphospho-sugar transferases"/>
    <property type="match status" value="1"/>
</dbReference>
<dbReference type="SUPFAM" id="SSF51161">
    <property type="entry name" value="Trimeric LpxA-like enzymes"/>
    <property type="match status" value="1"/>
</dbReference>
<dbReference type="PROSITE" id="PS00101">
    <property type="entry name" value="HEXAPEP_TRANSFERASES"/>
    <property type="match status" value="1"/>
</dbReference>
<keyword id="KW-0012">Acyltransferase</keyword>
<keyword id="KW-0133">Cell shape</keyword>
<keyword id="KW-0961">Cell wall biogenesis/degradation</keyword>
<keyword id="KW-0963">Cytoplasm</keyword>
<keyword id="KW-0460">Magnesium</keyword>
<keyword id="KW-0479">Metal-binding</keyword>
<keyword id="KW-0511">Multifunctional enzyme</keyword>
<keyword id="KW-0548">Nucleotidyltransferase</keyword>
<keyword id="KW-0573">Peptidoglycan synthesis</keyword>
<keyword id="KW-0677">Repeat</keyword>
<keyword id="KW-0808">Transferase</keyword>
<sequence>MGLSVVILAAGKGSRMNSNKPKVLQTLAAKTLIEHVVSSVEKLNPDNIVVVTGHLKEQVEDALQGRNITFVYQQQQLGTGHAVLQALPYLKEQKVLILYGDVPLISTEVLENLVDTTNDDDLGVLTAFVENPQGLGRIVRDKFGAVTEIVEEKDANDIQRQIKEINTGIYCVHKNLLQKWLPEIKANNVQKEYYLTDIITFAKADHVSINVTHPINEFEILGVNDRTQLASLERVWQRNVAEKIMAKGVSIADPNRFDVRGNLDVGKDCWIDINVIIKGNVKLGNNVVIGANCILKNCIIEDNVRIKSNSMVDGSIIREGAIVGPFARVRPECDVKEGAVIGNFVEAKKTILGKGSKASHLTYLGDSEIGANCNIGAGVITCNYDGVNKHKTVIGDYAFIGSDSQLIAPVNIGQGATVGAGSTIAKDVPADNLAISRARQRHIDTWQRPVKKTDK</sequence>
<accession>A0Q565</accession>
<proteinExistence type="inferred from homology"/>
<gene>
    <name evidence="1" type="primary">glmU</name>
    <name type="ordered locus">FTN_0484</name>
</gene>
<feature type="chain" id="PRO_1000056157" description="Bifunctional protein GlmU">
    <location>
        <begin position="1"/>
        <end position="455"/>
    </location>
</feature>
<feature type="region of interest" description="Pyrophosphorylase" evidence="1">
    <location>
        <begin position="1"/>
        <end position="226"/>
    </location>
</feature>
<feature type="region of interest" description="Linker" evidence="1">
    <location>
        <begin position="227"/>
        <end position="247"/>
    </location>
</feature>
<feature type="region of interest" description="N-acetyltransferase" evidence="1">
    <location>
        <begin position="248"/>
        <end position="455"/>
    </location>
</feature>
<feature type="active site" description="Proton acceptor" evidence="1">
    <location>
        <position position="360"/>
    </location>
</feature>
<feature type="binding site" evidence="1">
    <location>
        <begin position="8"/>
        <end position="11"/>
    </location>
    <ligand>
        <name>UDP-N-acetyl-alpha-D-glucosamine</name>
        <dbReference type="ChEBI" id="CHEBI:57705"/>
    </ligand>
</feature>
<feature type="binding site" evidence="1">
    <location>
        <position position="22"/>
    </location>
    <ligand>
        <name>UDP-N-acetyl-alpha-D-glucosamine</name>
        <dbReference type="ChEBI" id="CHEBI:57705"/>
    </ligand>
</feature>
<feature type="binding site" evidence="1">
    <location>
        <position position="73"/>
    </location>
    <ligand>
        <name>UDP-N-acetyl-alpha-D-glucosamine</name>
        <dbReference type="ChEBI" id="CHEBI:57705"/>
    </ligand>
</feature>
<feature type="binding site" evidence="1">
    <location>
        <begin position="78"/>
        <end position="79"/>
    </location>
    <ligand>
        <name>UDP-N-acetyl-alpha-D-glucosamine</name>
        <dbReference type="ChEBI" id="CHEBI:57705"/>
    </ligand>
</feature>
<feature type="binding site" evidence="1">
    <location>
        <begin position="99"/>
        <end position="101"/>
    </location>
    <ligand>
        <name>UDP-N-acetyl-alpha-D-glucosamine</name>
        <dbReference type="ChEBI" id="CHEBI:57705"/>
    </ligand>
</feature>
<feature type="binding site" evidence="1">
    <location>
        <position position="101"/>
    </location>
    <ligand>
        <name>Mg(2+)</name>
        <dbReference type="ChEBI" id="CHEBI:18420"/>
    </ligand>
</feature>
<feature type="binding site" evidence="1">
    <location>
        <position position="136"/>
    </location>
    <ligand>
        <name>UDP-N-acetyl-alpha-D-glucosamine</name>
        <dbReference type="ChEBI" id="CHEBI:57705"/>
    </ligand>
</feature>
<feature type="binding site" evidence="1">
    <location>
        <position position="151"/>
    </location>
    <ligand>
        <name>UDP-N-acetyl-alpha-D-glucosamine</name>
        <dbReference type="ChEBI" id="CHEBI:57705"/>
    </ligand>
</feature>
<feature type="binding site" evidence="1">
    <location>
        <position position="166"/>
    </location>
    <ligand>
        <name>UDP-N-acetyl-alpha-D-glucosamine</name>
        <dbReference type="ChEBI" id="CHEBI:57705"/>
    </ligand>
</feature>
<feature type="binding site" evidence="1">
    <location>
        <position position="224"/>
    </location>
    <ligand>
        <name>Mg(2+)</name>
        <dbReference type="ChEBI" id="CHEBI:18420"/>
    </ligand>
</feature>
<feature type="binding site" evidence="1">
    <location>
        <position position="224"/>
    </location>
    <ligand>
        <name>UDP-N-acetyl-alpha-D-glucosamine</name>
        <dbReference type="ChEBI" id="CHEBI:57705"/>
    </ligand>
</feature>
<feature type="binding site" evidence="1">
    <location>
        <position position="330"/>
    </location>
    <ligand>
        <name>UDP-N-acetyl-alpha-D-glucosamine</name>
        <dbReference type="ChEBI" id="CHEBI:57705"/>
    </ligand>
</feature>
<feature type="binding site" evidence="1">
    <location>
        <position position="348"/>
    </location>
    <ligand>
        <name>UDP-N-acetyl-alpha-D-glucosamine</name>
        <dbReference type="ChEBI" id="CHEBI:57705"/>
    </ligand>
</feature>
<feature type="binding site" evidence="1">
    <location>
        <position position="363"/>
    </location>
    <ligand>
        <name>UDP-N-acetyl-alpha-D-glucosamine</name>
        <dbReference type="ChEBI" id="CHEBI:57705"/>
    </ligand>
</feature>
<feature type="binding site" evidence="1">
    <location>
        <position position="374"/>
    </location>
    <ligand>
        <name>UDP-N-acetyl-alpha-D-glucosamine</name>
        <dbReference type="ChEBI" id="CHEBI:57705"/>
    </ligand>
</feature>
<feature type="binding site" evidence="1">
    <location>
        <position position="377"/>
    </location>
    <ligand>
        <name>acetyl-CoA</name>
        <dbReference type="ChEBI" id="CHEBI:57288"/>
    </ligand>
</feature>
<feature type="binding site" evidence="1">
    <location>
        <begin position="383"/>
        <end position="384"/>
    </location>
    <ligand>
        <name>acetyl-CoA</name>
        <dbReference type="ChEBI" id="CHEBI:57288"/>
    </ligand>
</feature>
<feature type="binding site" evidence="1">
    <location>
        <position position="402"/>
    </location>
    <ligand>
        <name>acetyl-CoA</name>
        <dbReference type="ChEBI" id="CHEBI:57288"/>
    </ligand>
</feature>
<feature type="binding site" evidence="1">
    <location>
        <position position="420"/>
    </location>
    <ligand>
        <name>acetyl-CoA</name>
        <dbReference type="ChEBI" id="CHEBI:57288"/>
    </ligand>
</feature>
<feature type="binding site" evidence="1">
    <location>
        <position position="437"/>
    </location>
    <ligand>
        <name>acetyl-CoA</name>
        <dbReference type="ChEBI" id="CHEBI:57288"/>
    </ligand>
</feature>
<name>GLMU_FRATN</name>
<reference key="1">
    <citation type="journal article" date="2007" name="Genome Biol.">
        <title>Comparison of Francisella tularensis genomes reveals evolutionary events associated with the emergence of human pathogenic strains.</title>
        <authorList>
            <person name="Rohmer L."/>
            <person name="Fong C."/>
            <person name="Abmayr S."/>
            <person name="Wasnick M."/>
            <person name="Larson Freeman T.J."/>
            <person name="Radey M."/>
            <person name="Guina T."/>
            <person name="Svensson K."/>
            <person name="Hayden H.S."/>
            <person name="Jacobs M."/>
            <person name="Gallagher L.A."/>
            <person name="Manoil C."/>
            <person name="Ernst R.K."/>
            <person name="Drees B."/>
            <person name="Buckley D."/>
            <person name="Haugen E."/>
            <person name="Bovee D."/>
            <person name="Zhou Y."/>
            <person name="Chang J."/>
            <person name="Levy R."/>
            <person name="Lim R."/>
            <person name="Gillett W."/>
            <person name="Guenthener D."/>
            <person name="Kang A."/>
            <person name="Shaffer S.A."/>
            <person name="Taylor G."/>
            <person name="Chen J."/>
            <person name="Gallis B."/>
            <person name="D'Argenio D.A."/>
            <person name="Forsman M."/>
            <person name="Olson M.V."/>
            <person name="Goodlett D.R."/>
            <person name="Kaul R."/>
            <person name="Miller S.I."/>
            <person name="Brittnacher M.J."/>
        </authorList>
    </citation>
    <scope>NUCLEOTIDE SEQUENCE [LARGE SCALE GENOMIC DNA]</scope>
    <source>
        <strain>U112</strain>
    </source>
</reference>
<organism>
    <name type="scientific">Francisella tularensis subsp. novicida (strain U112)</name>
    <dbReference type="NCBI Taxonomy" id="401614"/>
    <lineage>
        <taxon>Bacteria</taxon>
        <taxon>Pseudomonadati</taxon>
        <taxon>Pseudomonadota</taxon>
        <taxon>Gammaproteobacteria</taxon>
        <taxon>Thiotrichales</taxon>
        <taxon>Francisellaceae</taxon>
        <taxon>Francisella</taxon>
    </lineage>
</organism>
<evidence type="ECO:0000255" key="1">
    <source>
        <dbReference type="HAMAP-Rule" id="MF_01631"/>
    </source>
</evidence>
<comment type="function">
    <text evidence="1">Catalyzes the last two sequential reactions in the de novo biosynthetic pathway for UDP-N-acetylglucosamine (UDP-GlcNAc). The C-terminal domain catalyzes the transfer of acetyl group from acetyl coenzyme A to glucosamine-1-phosphate (GlcN-1-P) to produce N-acetylglucosamine-1-phosphate (GlcNAc-1-P), which is converted into UDP-GlcNAc by the transfer of uridine 5-monophosphate (from uridine 5-triphosphate), a reaction catalyzed by the N-terminal domain.</text>
</comment>
<comment type="catalytic activity">
    <reaction evidence="1">
        <text>alpha-D-glucosamine 1-phosphate + acetyl-CoA = N-acetyl-alpha-D-glucosamine 1-phosphate + CoA + H(+)</text>
        <dbReference type="Rhea" id="RHEA:13725"/>
        <dbReference type="ChEBI" id="CHEBI:15378"/>
        <dbReference type="ChEBI" id="CHEBI:57287"/>
        <dbReference type="ChEBI" id="CHEBI:57288"/>
        <dbReference type="ChEBI" id="CHEBI:57776"/>
        <dbReference type="ChEBI" id="CHEBI:58516"/>
        <dbReference type="EC" id="2.3.1.157"/>
    </reaction>
</comment>
<comment type="catalytic activity">
    <reaction evidence="1">
        <text>N-acetyl-alpha-D-glucosamine 1-phosphate + UTP + H(+) = UDP-N-acetyl-alpha-D-glucosamine + diphosphate</text>
        <dbReference type="Rhea" id="RHEA:13509"/>
        <dbReference type="ChEBI" id="CHEBI:15378"/>
        <dbReference type="ChEBI" id="CHEBI:33019"/>
        <dbReference type="ChEBI" id="CHEBI:46398"/>
        <dbReference type="ChEBI" id="CHEBI:57705"/>
        <dbReference type="ChEBI" id="CHEBI:57776"/>
        <dbReference type="EC" id="2.7.7.23"/>
    </reaction>
</comment>
<comment type="cofactor">
    <cofactor evidence="1">
        <name>Mg(2+)</name>
        <dbReference type="ChEBI" id="CHEBI:18420"/>
    </cofactor>
    <text evidence="1">Binds 1 Mg(2+) ion per subunit.</text>
</comment>
<comment type="pathway">
    <text evidence="1">Nucleotide-sugar biosynthesis; UDP-N-acetyl-alpha-D-glucosamine biosynthesis; N-acetyl-alpha-D-glucosamine 1-phosphate from alpha-D-glucosamine 6-phosphate (route II): step 2/2.</text>
</comment>
<comment type="pathway">
    <text evidence="1">Nucleotide-sugar biosynthesis; UDP-N-acetyl-alpha-D-glucosamine biosynthesis; UDP-N-acetyl-alpha-D-glucosamine from N-acetyl-alpha-D-glucosamine 1-phosphate: step 1/1.</text>
</comment>
<comment type="pathway">
    <text evidence="1">Bacterial outer membrane biogenesis; LPS lipid A biosynthesis.</text>
</comment>
<comment type="subunit">
    <text evidence="1">Homotrimer.</text>
</comment>
<comment type="subcellular location">
    <subcellularLocation>
        <location evidence="1">Cytoplasm</location>
    </subcellularLocation>
</comment>
<comment type="similarity">
    <text evidence="1">In the N-terminal section; belongs to the N-acetylglucosamine-1-phosphate uridyltransferase family.</text>
</comment>
<comment type="similarity">
    <text evidence="1">In the C-terminal section; belongs to the transferase hexapeptide repeat family.</text>
</comment>
<protein>
    <recommendedName>
        <fullName evidence="1">Bifunctional protein GlmU</fullName>
    </recommendedName>
    <domain>
        <recommendedName>
            <fullName evidence="1">UDP-N-acetylglucosamine pyrophosphorylase</fullName>
            <ecNumber evidence="1">2.7.7.23</ecNumber>
        </recommendedName>
        <alternativeName>
            <fullName evidence="1">N-acetylglucosamine-1-phosphate uridyltransferase</fullName>
        </alternativeName>
    </domain>
    <domain>
        <recommendedName>
            <fullName evidence="1">Glucosamine-1-phosphate N-acetyltransferase</fullName>
            <ecNumber evidence="1">2.3.1.157</ecNumber>
        </recommendedName>
    </domain>
</protein>